<dbReference type="EMBL" id="AM743169">
    <property type="protein sequence ID" value="CAQ44474.1"/>
    <property type="molecule type" value="Genomic_DNA"/>
</dbReference>
<dbReference type="RefSeq" id="WP_005408208.1">
    <property type="nucleotide sequence ID" value="NC_010943.1"/>
</dbReference>
<dbReference type="SMR" id="B2FQ44"/>
<dbReference type="EnsemblBacteria" id="CAQ44474">
    <property type="protein sequence ID" value="CAQ44474"/>
    <property type="gene ID" value="Smlt0905"/>
</dbReference>
<dbReference type="GeneID" id="97259933"/>
<dbReference type="KEGG" id="sml:Smlt0905"/>
<dbReference type="eggNOG" id="COG0051">
    <property type="taxonomic scope" value="Bacteria"/>
</dbReference>
<dbReference type="HOGENOM" id="CLU_122625_1_3_6"/>
<dbReference type="Proteomes" id="UP000008840">
    <property type="component" value="Chromosome"/>
</dbReference>
<dbReference type="GO" id="GO:1990904">
    <property type="term" value="C:ribonucleoprotein complex"/>
    <property type="evidence" value="ECO:0007669"/>
    <property type="project" value="UniProtKB-KW"/>
</dbReference>
<dbReference type="GO" id="GO:0005840">
    <property type="term" value="C:ribosome"/>
    <property type="evidence" value="ECO:0007669"/>
    <property type="project" value="UniProtKB-KW"/>
</dbReference>
<dbReference type="GO" id="GO:0003735">
    <property type="term" value="F:structural constituent of ribosome"/>
    <property type="evidence" value="ECO:0007669"/>
    <property type="project" value="InterPro"/>
</dbReference>
<dbReference type="GO" id="GO:0000049">
    <property type="term" value="F:tRNA binding"/>
    <property type="evidence" value="ECO:0007669"/>
    <property type="project" value="UniProtKB-UniRule"/>
</dbReference>
<dbReference type="GO" id="GO:0006412">
    <property type="term" value="P:translation"/>
    <property type="evidence" value="ECO:0007669"/>
    <property type="project" value="UniProtKB-UniRule"/>
</dbReference>
<dbReference type="FunFam" id="3.30.70.600:FF:000001">
    <property type="entry name" value="30S ribosomal protein S10"/>
    <property type="match status" value="1"/>
</dbReference>
<dbReference type="Gene3D" id="3.30.70.600">
    <property type="entry name" value="Ribosomal protein S10 domain"/>
    <property type="match status" value="1"/>
</dbReference>
<dbReference type="HAMAP" id="MF_00508">
    <property type="entry name" value="Ribosomal_uS10"/>
    <property type="match status" value="1"/>
</dbReference>
<dbReference type="InterPro" id="IPR001848">
    <property type="entry name" value="Ribosomal_uS10"/>
</dbReference>
<dbReference type="InterPro" id="IPR018268">
    <property type="entry name" value="Ribosomal_uS10_CS"/>
</dbReference>
<dbReference type="InterPro" id="IPR027486">
    <property type="entry name" value="Ribosomal_uS10_dom"/>
</dbReference>
<dbReference type="InterPro" id="IPR036838">
    <property type="entry name" value="Ribosomal_uS10_dom_sf"/>
</dbReference>
<dbReference type="NCBIfam" id="NF001861">
    <property type="entry name" value="PRK00596.1"/>
    <property type="match status" value="1"/>
</dbReference>
<dbReference type="NCBIfam" id="TIGR01049">
    <property type="entry name" value="rpsJ_bact"/>
    <property type="match status" value="1"/>
</dbReference>
<dbReference type="PANTHER" id="PTHR11700">
    <property type="entry name" value="30S RIBOSOMAL PROTEIN S10 FAMILY MEMBER"/>
    <property type="match status" value="1"/>
</dbReference>
<dbReference type="Pfam" id="PF00338">
    <property type="entry name" value="Ribosomal_S10"/>
    <property type="match status" value="1"/>
</dbReference>
<dbReference type="PRINTS" id="PR00971">
    <property type="entry name" value="RIBOSOMALS10"/>
</dbReference>
<dbReference type="SMART" id="SM01403">
    <property type="entry name" value="Ribosomal_S10"/>
    <property type="match status" value="1"/>
</dbReference>
<dbReference type="SUPFAM" id="SSF54999">
    <property type="entry name" value="Ribosomal protein S10"/>
    <property type="match status" value="1"/>
</dbReference>
<dbReference type="PROSITE" id="PS00361">
    <property type="entry name" value="RIBOSOMAL_S10"/>
    <property type="match status" value="1"/>
</dbReference>
<proteinExistence type="inferred from homology"/>
<sequence length="103" mass="11701">MADQKIRIRLKAFDHRLIDRSASEIVETAKRTGAQVRGPIPLPTKIERYTVLVSPHVDKDARDQYETRTHKRVLDIVDPNDKTVDALMKLELAAGVDVQIKLT</sequence>
<organism>
    <name type="scientific">Stenotrophomonas maltophilia (strain K279a)</name>
    <dbReference type="NCBI Taxonomy" id="522373"/>
    <lineage>
        <taxon>Bacteria</taxon>
        <taxon>Pseudomonadati</taxon>
        <taxon>Pseudomonadota</taxon>
        <taxon>Gammaproteobacteria</taxon>
        <taxon>Lysobacterales</taxon>
        <taxon>Lysobacteraceae</taxon>
        <taxon>Stenotrophomonas</taxon>
        <taxon>Stenotrophomonas maltophilia group</taxon>
    </lineage>
</organism>
<comment type="function">
    <text evidence="1">Involved in the binding of tRNA to the ribosomes.</text>
</comment>
<comment type="subunit">
    <text evidence="1">Part of the 30S ribosomal subunit.</text>
</comment>
<comment type="similarity">
    <text evidence="1">Belongs to the universal ribosomal protein uS10 family.</text>
</comment>
<gene>
    <name evidence="1" type="primary">rpsJ</name>
    <name type="ordered locus">Smlt0905</name>
</gene>
<accession>B2FQ44</accession>
<keyword id="KW-1185">Reference proteome</keyword>
<keyword id="KW-0687">Ribonucleoprotein</keyword>
<keyword id="KW-0689">Ribosomal protein</keyword>
<protein>
    <recommendedName>
        <fullName evidence="1">Small ribosomal subunit protein uS10</fullName>
    </recommendedName>
    <alternativeName>
        <fullName evidence="2">30S ribosomal protein S10</fullName>
    </alternativeName>
</protein>
<reference key="1">
    <citation type="journal article" date="2008" name="Genome Biol.">
        <title>The complete genome, comparative and functional analysis of Stenotrophomonas maltophilia reveals an organism heavily shielded by drug resistance determinants.</title>
        <authorList>
            <person name="Crossman L.C."/>
            <person name="Gould V.C."/>
            <person name="Dow J.M."/>
            <person name="Vernikos G.S."/>
            <person name="Okazaki A."/>
            <person name="Sebaihia M."/>
            <person name="Saunders D."/>
            <person name="Arrowsmith C."/>
            <person name="Carver T."/>
            <person name="Peters N."/>
            <person name="Adlem E."/>
            <person name="Kerhornou A."/>
            <person name="Lord A."/>
            <person name="Murphy L."/>
            <person name="Seeger K."/>
            <person name="Squares R."/>
            <person name="Rutter S."/>
            <person name="Quail M.A."/>
            <person name="Rajandream M.A."/>
            <person name="Harris D."/>
            <person name="Churcher C."/>
            <person name="Bentley S.D."/>
            <person name="Parkhill J."/>
            <person name="Thomson N.R."/>
            <person name="Avison M.B."/>
        </authorList>
    </citation>
    <scope>NUCLEOTIDE SEQUENCE [LARGE SCALE GENOMIC DNA]</scope>
    <source>
        <strain>K279a</strain>
    </source>
</reference>
<feature type="chain" id="PRO_1000127188" description="Small ribosomal subunit protein uS10">
    <location>
        <begin position="1"/>
        <end position="103"/>
    </location>
</feature>
<evidence type="ECO:0000255" key="1">
    <source>
        <dbReference type="HAMAP-Rule" id="MF_00508"/>
    </source>
</evidence>
<evidence type="ECO:0000305" key="2"/>
<name>RS10_STRMK</name>